<name>HPAB1_PSESG</name>
<organism>
    <name type="scientific">Pseudomonas savastanoi pv. glycinea</name>
    <name type="common">Pseudomonas syringae pv. glycinea</name>
    <dbReference type="NCBI Taxonomy" id="318"/>
    <lineage>
        <taxon>Bacteria</taxon>
        <taxon>Pseudomonadati</taxon>
        <taxon>Pseudomonadota</taxon>
        <taxon>Gammaproteobacteria</taxon>
        <taxon>Pseudomonadales</taxon>
        <taxon>Pseudomonadaceae</taxon>
        <taxon>Pseudomonas</taxon>
    </lineage>
</organism>
<evidence type="ECO:0000250" key="1"/>
<evidence type="ECO:0000256" key="2">
    <source>
        <dbReference type="SAM" id="MobiDB-lite"/>
    </source>
</evidence>
<evidence type="ECO:0000269" key="3">
    <source ref="1"/>
</evidence>
<evidence type="ECO:0000305" key="4"/>
<sequence length="523" mass="57997">MPGINGAGPSNFFWQWRTDGEPVTEREHDSSRSASSANSPEFPPPASPAESGRQRLLRSSALSRQTREWLEATPARVQGATPPAEARQSPEAQQAERIVQELVRGGADLNNVRTMLRNVMDNNAVAFSRVERDILLQHFPNMLMTGISSDSVLANELRQRLRQTVRQQRIQSSTPARLADSSSGSSQRSLIGRSTMLMTPGRSSSSSAAASRTSVDRHPQGLDLESNEVLRRLTQEGVDMERLRTSLGRYIMSLEPLPPDLRRALESVGINPFMPEDLSLVDHPVLNFSAALNRMLASRQTTTNSPELPPLASSAESGRRRLLRSPPLLSGQREWIEQNMRQEAEPQSSRLNRAVRLAVMPPQNENEDNVAYAIRLRRLNPGADVSRVVASFITDPAARQQVVNDIRAALDIAPQFSQLRTISKADAESEELGFRDAADHPDNATSCLFGEELSLSNPDQQVIGLAVNPTDKPQPYSQEVNKALTFMDMKKLAQYLADKPEHPLNRQRLDAKNIAKYAFKIVP</sequence>
<comment type="function">
    <text evidence="3">Effector protein that plays different roles depending on the species and plant cultivars that interact with the pathogen. Acts as a virulence determinant by enhancing the development of disease symptoms and bacterial growth. Acts as an avirulence factor by eliciting hypersensitive response (HR) and plant resistance.</text>
</comment>
<comment type="subcellular location">
    <subcellularLocation>
        <location>Secreted</location>
    </subcellularLocation>
    <text evidence="1">Secreted via type III secretion system (T3SS).</text>
</comment>
<comment type="induction">
    <text evidence="4">Transcriptionally induced by HrpL.</text>
</comment>
<comment type="similarity">
    <text evidence="4">Belongs to the HopAB family.</text>
</comment>
<reference key="1">
    <citation type="journal article" date="2002" name="Mol. Plant Pathol.">
        <title>Location and activity of members of a family of virPphA homologues in pathovars of Pseudomonas syringae and P.savastanoi.</title>
        <authorList>
            <person name="Jackson R.W."/>
            <person name="Mansfield J.W."/>
            <person name="Ammouneh H."/>
            <person name="Dutton L.C."/>
            <person name="Wharton B."/>
            <person name="Ortiz-Barredo A."/>
            <person name="Arnold D.L."/>
            <person name="Tsiamis G."/>
            <person name="Sesma A."/>
            <person name="Butcher D."/>
            <person name="Boch J."/>
            <person name="Kim Y.J."/>
            <person name="Martin G.B."/>
            <person name="Tegli S."/>
            <person name="Murillo J."/>
            <person name="Vivian A."/>
        </authorList>
        <dbReference type="AGRICOLA" id="IND23295115"/>
    </citation>
    <scope>NUCLEOTIDE SEQUENCE [GENOMIC DNA]</scope>
    <scope>FUNCTION</scope>
    <source>
        <strain>49a/90</strain>
        <plasmid>pAOB1411</plasmid>
    </source>
</reference>
<keyword id="KW-0928">Hypersensitive response elicitation</keyword>
<keyword id="KW-0614">Plasmid</keyword>
<keyword id="KW-0964">Secreted</keyword>
<keyword id="KW-0843">Virulence</keyword>
<proteinExistence type="inferred from homology"/>
<gene>
    <name type="primary">hopAB1</name>
    <name type="synonym">virPphAPgy</name>
</gene>
<accession>Q8RK12</accession>
<geneLocation type="plasmid">
    <name>pAOB1411</name>
</geneLocation>
<feature type="chain" id="PRO_0000236791" description="Effector protein hopAB1">
    <location>
        <begin position="1"/>
        <end position="523"/>
    </location>
</feature>
<feature type="region of interest" description="Disordered" evidence="2">
    <location>
        <begin position="1"/>
        <end position="94"/>
    </location>
</feature>
<feature type="region of interest" description="Disordered" evidence="2">
    <location>
        <begin position="165"/>
        <end position="223"/>
    </location>
</feature>
<feature type="region of interest" description="Disordered" evidence="2">
    <location>
        <begin position="299"/>
        <end position="320"/>
    </location>
</feature>
<feature type="compositionally biased region" description="Basic and acidic residues" evidence="2">
    <location>
        <begin position="18"/>
        <end position="31"/>
    </location>
</feature>
<feature type="compositionally biased region" description="Low complexity" evidence="2">
    <location>
        <begin position="181"/>
        <end position="194"/>
    </location>
</feature>
<protein>
    <recommendedName>
        <fullName>Effector protein hopAB1</fullName>
    </recommendedName>
    <alternativeName>
        <fullName>Protein virPphAPgy</fullName>
    </alternativeName>
</protein>
<dbReference type="EMBL" id="AJ439728">
    <property type="protein sequence ID" value="CAD29299.1"/>
    <property type="molecule type" value="Genomic_DNA"/>
</dbReference>
<dbReference type="RefSeq" id="WP_032704419.1">
    <property type="nucleotide sequence ID" value="NZ_LGLL01000129.1"/>
</dbReference>
<dbReference type="SMR" id="Q8RK12"/>
<dbReference type="GO" id="GO:0005576">
    <property type="term" value="C:extracellular region"/>
    <property type="evidence" value="ECO:0007669"/>
    <property type="project" value="UniProtKB-SubCell"/>
</dbReference>
<dbReference type="GO" id="GO:0052040">
    <property type="term" value="P:symbiont-mediated perturbation of host programmed cell death"/>
    <property type="evidence" value="ECO:0007669"/>
    <property type="project" value="UniProtKB-KW"/>
</dbReference>
<dbReference type="CDD" id="cd12803">
    <property type="entry name" value="HopAB_BID"/>
    <property type="match status" value="1"/>
</dbReference>
<dbReference type="CDD" id="cd12802">
    <property type="entry name" value="HopAB_PID"/>
    <property type="match status" value="1"/>
</dbReference>
<dbReference type="Gene3D" id="1.20.1280.110">
    <property type="match status" value="1"/>
</dbReference>
<dbReference type="Gene3D" id="3.30.40.110">
    <property type="entry name" value="AvrPtoB, C-terminal domain"/>
    <property type="match status" value="1"/>
</dbReference>
<dbReference type="Gene3D" id="1.20.1280.220">
    <property type="entry name" value="Effector protein HopAB, BAK1-interacting domain"/>
    <property type="match status" value="1"/>
</dbReference>
<dbReference type="InterPro" id="IPR015133">
    <property type="entry name" value="E3_ubiquit_lig_AvrPtoB"/>
</dbReference>
<dbReference type="InterPro" id="IPR031759">
    <property type="entry name" value="HopAB_BAK-bd"/>
</dbReference>
<dbReference type="InterPro" id="IPR038342">
    <property type="entry name" value="HopAB_BAK-bd_sf"/>
</dbReference>
<dbReference type="InterPro" id="IPR038448">
    <property type="entry name" value="HopAB_E3_ubiquit_lig_sf"/>
</dbReference>
<dbReference type="InterPro" id="IPR033743">
    <property type="entry name" value="HopAB_PID"/>
</dbReference>
<dbReference type="Pfam" id="PF09046">
    <property type="entry name" value="AvrPtoB-E3_ubiq"/>
    <property type="match status" value="1"/>
</dbReference>
<dbReference type="Pfam" id="PF16847">
    <property type="entry name" value="AvrPtoB_bdg"/>
    <property type="match status" value="1"/>
</dbReference>